<gene>
    <name evidence="1" type="primary">rplJ</name>
    <name type="ordered locus">HPG27_1146</name>
</gene>
<comment type="function">
    <text evidence="1">Forms part of the ribosomal stalk, playing a central role in the interaction of the ribosome with GTP-bound translation factors.</text>
</comment>
<comment type="subunit">
    <text evidence="1">Part of the ribosomal stalk of the 50S ribosomal subunit. The N-terminus interacts with L11 and the large rRNA to form the base of the stalk. The C-terminus forms an elongated spine to which L12 dimers bind in a sequential fashion forming a multimeric L10(L12)X complex.</text>
</comment>
<comment type="similarity">
    <text evidence="1">Belongs to the universal ribosomal protein uL10 family.</text>
</comment>
<accession>B5Z8J7</accession>
<organism>
    <name type="scientific">Helicobacter pylori (strain G27)</name>
    <dbReference type="NCBI Taxonomy" id="563041"/>
    <lineage>
        <taxon>Bacteria</taxon>
        <taxon>Pseudomonadati</taxon>
        <taxon>Campylobacterota</taxon>
        <taxon>Epsilonproteobacteria</taxon>
        <taxon>Campylobacterales</taxon>
        <taxon>Helicobacteraceae</taxon>
        <taxon>Helicobacter</taxon>
    </lineage>
</organism>
<evidence type="ECO:0000255" key="1">
    <source>
        <dbReference type="HAMAP-Rule" id="MF_00362"/>
    </source>
</evidence>
<evidence type="ECO:0000305" key="2"/>
<dbReference type="EMBL" id="CP001173">
    <property type="protein sequence ID" value="ACI27896.1"/>
    <property type="molecule type" value="Genomic_DNA"/>
</dbReference>
<dbReference type="RefSeq" id="WP_001171774.1">
    <property type="nucleotide sequence ID" value="NC_011333.1"/>
</dbReference>
<dbReference type="SMR" id="B5Z8J7"/>
<dbReference type="KEGG" id="hpg:HPG27_1146"/>
<dbReference type="HOGENOM" id="CLU_092227_2_2_7"/>
<dbReference type="Proteomes" id="UP000001735">
    <property type="component" value="Chromosome"/>
</dbReference>
<dbReference type="GO" id="GO:0015934">
    <property type="term" value="C:large ribosomal subunit"/>
    <property type="evidence" value="ECO:0007669"/>
    <property type="project" value="InterPro"/>
</dbReference>
<dbReference type="GO" id="GO:0070180">
    <property type="term" value="F:large ribosomal subunit rRNA binding"/>
    <property type="evidence" value="ECO:0007669"/>
    <property type="project" value="UniProtKB-UniRule"/>
</dbReference>
<dbReference type="GO" id="GO:0003735">
    <property type="term" value="F:structural constituent of ribosome"/>
    <property type="evidence" value="ECO:0007669"/>
    <property type="project" value="InterPro"/>
</dbReference>
<dbReference type="GO" id="GO:0006412">
    <property type="term" value="P:translation"/>
    <property type="evidence" value="ECO:0007669"/>
    <property type="project" value="UniProtKB-UniRule"/>
</dbReference>
<dbReference type="CDD" id="cd05797">
    <property type="entry name" value="Ribosomal_L10"/>
    <property type="match status" value="1"/>
</dbReference>
<dbReference type="FunFam" id="3.30.70.1730:FF:000009">
    <property type="entry name" value="50S ribosomal protein L10"/>
    <property type="match status" value="1"/>
</dbReference>
<dbReference type="Gene3D" id="3.30.70.1730">
    <property type="match status" value="1"/>
</dbReference>
<dbReference type="HAMAP" id="MF_00362">
    <property type="entry name" value="Ribosomal_uL10"/>
    <property type="match status" value="1"/>
</dbReference>
<dbReference type="InterPro" id="IPR001790">
    <property type="entry name" value="Ribosomal_uL10"/>
</dbReference>
<dbReference type="InterPro" id="IPR043141">
    <property type="entry name" value="Ribosomal_uL10-like_sf"/>
</dbReference>
<dbReference type="InterPro" id="IPR022973">
    <property type="entry name" value="Ribosomal_uL10_bac"/>
</dbReference>
<dbReference type="InterPro" id="IPR047865">
    <property type="entry name" value="Ribosomal_uL10_bac_type"/>
</dbReference>
<dbReference type="InterPro" id="IPR002363">
    <property type="entry name" value="Ribosomal_uL10_CS_bac"/>
</dbReference>
<dbReference type="NCBIfam" id="NF000955">
    <property type="entry name" value="PRK00099.1-1"/>
    <property type="match status" value="1"/>
</dbReference>
<dbReference type="PANTHER" id="PTHR11560">
    <property type="entry name" value="39S RIBOSOMAL PROTEIN L10, MITOCHONDRIAL"/>
    <property type="match status" value="1"/>
</dbReference>
<dbReference type="Pfam" id="PF00466">
    <property type="entry name" value="Ribosomal_L10"/>
    <property type="match status" value="1"/>
</dbReference>
<dbReference type="SUPFAM" id="SSF160369">
    <property type="entry name" value="Ribosomal protein L10-like"/>
    <property type="match status" value="1"/>
</dbReference>
<dbReference type="PROSITE" id="PS01109">
    <property type="entry name" value="RIBOSOMAL_L10"/>
    <property type="match status" value="1"/>
</dbReference>
<proteinExistence type="inferred from homology"/>
<sequence length="164" mass="18576">MQKQHQRQHKVELVANLKSQFVDAKALLICDYKGLSVKKLEALRNKARNQGIKVQVIKNTLAHIAMKEAGYSDLDLKETNVFLWGGDQIALSKLVFDFQKEHKDHFVLKAGLFDKESVSVAHVEAVSKLPSKEELMGMLLSVWTAPARYFVTGLDNLRKAKEEN</sequence>
<protein>
    <recommendedName>
        <fullName evidence="1">Large ribosomal subunit protein uL10</fullName>
    </recommendedName>
    <alternativeName>
        <fullName evidence="2">50S ribosomal protein L10</fullName>
    </alternativeName>
</protein>
<reference key="1">
    <citation type="journal article" date="2009" name="J. Bacteriol.">
        <title>The complete genome sequence of Helicobacter pylori strain G27.</title>
        <authorList>
            <person name="Baltrus D.A."/>
            <person name="Amieva M.R."/>
            <person name="Covacci A."/>
            <person name="Lowe T.M."/>
            <person name="Merrell D.S."/>
            <person name="Ottemann K.M."/>
            <person name="Stein M."/>
            <person name="Salama N.R."/>
            <person name="Guillemin K."/>
        </authorList>
    </citation>
    <scope>NUCLEOTIDE SEQUENCE [LARGE SCALE GENOMIC DNA]</scope>
    <source>
        <strain>G27</strain>
    </source>
</reference>
<keyword id="KW-1185">Reference proteome</keyword>
<keyword id="KW-0687">Ribonucleoprotein</keyword>
<keyword id="KW-0689">Ribosomal protein</keyword>
<keyword id="KW-0694">RNA-binding</keyword>
<keyword id="KW-0699">rRNA-binding</keyword>
<feature type="chain" id="PRO_1000120972" description="Large ribosomal subunit protein uL10">
    <location>
        <begin position="1"/>
        <end position="164"/>
    </location>
</feature>
<name>RL10_HELPG</name>